<gene>
    <name evidence="4" type="primary">STORR</name>
</gene>
<dbReference type="EC" id="1.14.19.54" evidence="3"/>
<dbReference type="EC" id="1.5.1.27" evidence="3"/>
<dbReference type="EMBL" id="KP998574">
    <property type="protein sequence ID" value="AKN63431.1"/>
    <property type="molecule type" value="mRNA"/>
</dbReference>
<dbReference type="SMR" id="P0DKI7"/>
<dbReference type="BRENDA" id="1.14.19.54">
    <property type="organism ID" value="4515"/>
</dbReference>
<dbReference type="BRENDA" id="1.5.1.27">
    <property type="organism ID" value="4515"/>
</dbReference>
<dbReference type="UniPathway" id="UPA00852"/>
<dbReference type="GO" id="GO:0016020">
    <property type="term" value="C:membrane"/>
    <property type="evidence" value="ECO:0007669"/>
    <property type="project" value="UniProtKB-SubCell"/>
</dbReference>
<dbReference type="GO" id="GO:0047128">
    <property type="term" value="F:1,2-dehydroreticulinium reductase (NADPH) activity"/>
    <property type="evidence" value="ECO:0007669"/>
    <property type="project" value="UniProtKB-EC"/>
</dbReference>
<dbReference type="GO" id="GO:0020037">
    <property type="term" value="F:heme binding"/>
    <property type="evidence" value="ECO:0007669"/>
    <property type="project" value="InterPro"/>
</dbReference>
<dbReference type="GO" id="GO:0005506">
    <property type="term" value="F:iron ion binding"/>
    <property type="evidence" value="ECO:0007669"/>
    <property type="project" value="InterPro"/>
</dbReference>
<dbReference type="GO" id="GO:0004497">
    <property type="term" value="F:monooxygenase activity"/>
    <property type="evidence" value="ECO:0007669"/>
    <property type="project" value="InterPro"/>
</dbReference>
<dbReference type="GO" id="GO:0016717">
    <property type="term" value="F:oxidoreductase activity, acting on paired donors, with oxidation of a pair of donors resulting in the reduction of molecular oxygen to two molecules of water"/>
    <property type="evidence" value="ECO:0000314"/>
    <property type="project" value="UniProtKB"/>
</dbReference>
<dbReference type="GO" id="GO:0016646">
    <property type="term" value="F:oxidoreductase activity, acting on the CH-NH group of donors, NAD or NADP as acceptor"/>
    <property type="evidence" value="ECO:0000314"/>
    <property type="project" value="UniProtKB"/>
</dbReference>
<dbReference type="GO" id="GO:0016616">
    <property type="term" value="F:oxidoreductase activity, acting on the CH-OH group of donors, NAD or NADP as acceptor"/>
    <property type="evidence" value="ECO:0007669"/>
    <property type="project" value="InterPro"/>
</dbReference>
<dbReference type="GO" id="GO:0097295">
    <property type="term" value="P:morphine biosynthetic process"/>
    <property type="evidence" value="ECO:0000315"/>
    <property type="project" value="UniProtKB"/>
</dbReference>
<dbReference type="CDD" id="cd19124">
    <property type="entry name" value="AKR_AKR4A_4B"/>
    <property type="match status" value="1"/>
</dbReference>
<dbReference type="CDD" id="cd20654">
    <property type="entry name" value="CYP82"/>
    <property type="match status" value="1"/>
</dbReference>
<dbReference type="FunFam" id="1.10.630.10:FF:000026">
    <property type="entry name" value="Cytochrome P450 82C4"/>
    <property type="match status" value="1"/>
</dbReference>
<dbReference type="FunFam" id="3.20.20.100:FF:000014">
    <property type="entry name" value="NAD(P)-linked oxidoreductase superfamily protein"/>
    <property type="match status" value="1"/>
</dbReference>
<dbReference type="Gene3D" id="1.10.630.10">
    <property type="entry name" value="Cytochrome P450"/>
    <property type="match status" value="1"/>
</dbReference>
<dbReference type="Gene3D" id="3.20.20.100">
    <property type="entry name" value="NADP-dependent oxidoreductase domain"/>
    <property type="match status" value="1"/>
</dbReference>
<dbReference type="InterPro" id="IPR020471">
    <property type="entry name" value="AKR"/>
</dbReference>
<dbReference type="InterPro" id="IPR044497">
    <property type="entry name" value="AKR4A/B"/>
</dbReference>
<dbReference type="InterPro" id="IPR018170">
    <property type="entry name" value="Aldo/ket_reductase_CS"/>
</dbReference>
<dbReference type="InterPro" id="IPR001128">
    <property type="entry name" value="Cyt_P450"/>
</dbReference>
<dbReference type="InterPro" id="IPR017972">
    <property type="entry name" value="Cyt_P450_CS"/>
</dbReference>
<dbReference type="InterPro" id="IPR036396">
    <property type="entry name" value="Cyt_P450_sf"/>
</dbReference>
<dbReference type="InterPro" id="IPR023210">
    <property type="entry name" value="NADP_OxRdtase_dom"/>
</dbReference>
<dbReference type="InterPro" id="IPR036812">
    <property type="entry name" value="NADP_OxRdtase_dom_sf"/>
</dbReference>
<dbReference type="InterPro" id="IPR050651">
    <property type="entry name" value="Plant_Cytochrome_P450_Monoox"/>
</dbReference>
<dbReference type="PANTHER" id="PTHR47947:SF26">
    <property type="entry name" value="CYTOCHROME P450"/>
    <property type="match status" value="1"/>
</dbReference>
<dbReference type="PANTHER" id="PTHR47947">
    <property type="entry name" value="CYTOCHROME P450 82C3-RELATED"/>
    <property type="match status" value="1"/>
</dbReference>
<dbReference type="Pfam" id="PF00248">
    <property type="entry name" value="Aldo_ket_red"/>
    <property type="match status" value="1"/>
</dbReference>
<dbReference type="Pfam" id="PF00067">
    <property type="entry name" value="p450"/>
    <property type="match status" value="1"/>
</dbReference>
<dbReference type="PRINTS" id="PR00069">
    <property type="entry name" value="ALDKETRDTASE"/>
</dbReference>
<dbReference type="SUPFAM" id="SSF48264">
    <property type="entry name" value="Cytochrome P450"/>
    <property type="match status" value="1"/>
</dbReference>
<dbReference type="SUPFAM" id="SSF51430">
    <property type="entry name" value="NAD(P)-linked oxidoreductase"/>
    <property type="match status" value="1"/>
</dbReference>
<dbReference type="PROSITE" id="PS00062">
    <property type="entry name" value="ALDOKETO_REDUCTASE_2"/>
    <property type="match status" value="1"/>
</dbReference>
<dbReference type="PROSITE" id="PS00063">
    <property type="entry name" value="ALDOKETO_REDUCTASE_3"/>
    <property type="match status" value="1"/>
</dbReference>
<dbReference type="PROSITE" id="PS00086">
    <property type="entry name" value="CYTOCHROME_P450"/>
    <property type="match status" value="1"/>
</dbReference>
<organism>
    <name type="scientific">Papaver somniferum</name>
    <name type="common">Opium poppy</name>
    <dbReference type="NCBI Taxonomy" id="3469"/>
    <lineage>
        <taxon>Eukaryota</taxon>
        <taxon>Viridiplantae</taxon>
        <taxon>Streptophyta</taxon>
        <taxon>Embryophyta</taxon>
        <taxon>Tracheophyta</taxon>
        <taxon>Spermatophyta</taxon>
        <taxon>Magnoliopsida</taxon>
        <taxon>Ranunculales</taxon>
        <taxon>Papaveraceae</taxon>
        <taxon>Papaveroideae</taxon>
        <taxon>Papaver</taxon>
    </lineage>
</organism>
<comment type="function">
    <text evidence="3">Bifunctional protein involved in the biosynthesis of morphinan-type benzylisoquinoline alkaloids. Required for the isomerization of (S)- to (R)-reticuline. The cytochrome P450 module is responsible for the conversion of (S)-reticuline to 1,2-dehydroreticuline while the oxidoreductase module converts 1,2-dehydroreticuline to (R)-reticuline.</text>
</comment>
<comment type="catalytic activity">
    <reaction evidence="3">
        <text>(R)-reticuline + NADP(+) = 1,2-dehydroreticuline + NADPH + H(+)</text>
        <dbReference type="Rhea" id="RHEA:17569"/>
        <dbReference type="ChEBI" id="CHEBI:15378"/>
        <dbReference type="ChEBI" id="CHEBI:18363"/>
        <dbReference type="ChEBI" id="CHEBI:57783"/>
        <dbReference type="ChEBI" id="CHEBI:58144"/>
        <dbReference type="ChEBI" id="CHEBI:58349"/>
        <dbReference type="EC" id="1.5.1.27"/>
    </reaction>
</comment>
<comment type="catalytic activity">
    <reaction evidence="3">
        <text>(S)-reticuline + reduced [NADPH--hemoprotein reductase] + O2 = 1,2-dehydroreticuline + oxidized [NADPH--hemoprotein reductase] + 2 H2O + H(+)</text>
        <dbReference type="Rhea" id="RHEA:56308"/>
        <dbReference type="Rhea" id="RHEA-COMP:11964"/>
        <dbReference type="Rhea" id="RHEA-COMP:11965"/>
        <dbReference type="ChEBI" id="CHEBI:15377"/>
        <dbReference type="ChEBI" id="CHEBI:15378"/>
        <dbReference type="ChEBI" id="CHEBI:15379"/>
        <dbReference type="ChEBI" id="CHEBI:18363"/>
        <dbReference type="ChEBI" id="CHEBI:57618"/>
        <dbReference type="ChEBI" id="CHEBI:57873"/>
        <dbReference type="ChEBI" id="CHEBI:58210"/>
        <dbReference type="EC" id="1.14.19.54"/>
    </reaction>
</comment>
<comment type="cofactor">
    <cofactor evidence="1">
        <name>heme</name>
        <dbReference type="ChEBI" id="CHEBI:30413"/>
    </cofactor>
</comment>
<comment type="biophysicochemical properties">
    <kinetics>
        <KM evidence="3">13 uM for (S)-reticuline</KM>
        <KM evidence="3">14 uM for 1,2-dehydroreticuline</KM>
    </kinetics>
</comment>
<comment type="pathway">
    <text evidence="5">Alkaloid biosynthesis; morphine biosynthesis.</text>
</comment>
<comment type="subcellular location">
    <subcellularLocation>
        <location evidence="2">Membrane</location>
        <topology evidence="2">Single-pass membrane protein</topology>
    </subcellularLocation>
</comment>
<comment type="similarity">
    <text evidence="5">In the N-terminal section; belongs to the cytochrome P450 family.</text>
</comment>
<comment type="similarity">
    <text evidence="5">In the C-terminal section; belongs to the aldo/keto reductase family.</text>
</comment>
<accession>P0DKI7</accession>
<accession>A0A0H4BL73</accession>
<protein>
    <recommendedName>
        <fullName evidence="4">Bifunctional protein STORR</fullName>
    </recommendedName>
    <alternativeName>
        <fullName evidence="4">(S)- to (R)-reticuline</fullName>
    </alternativeName>
    <domain>
        <recommendedName>
            <fullName evidence="4">Cytochrome P450 82Y2</fullName>
            <ecNumber evidence="3">1.14.19.54</ecNumber>
        </recommendedName>
        <alternativeName>
            <fullName evidence="5">1,2-dehydroreticuline synthase</fullName>
        </alternativeName>
        <alternativeName>
            <fullName evidence="4">CYP82Y2</fullName>
        </alternativeName>
    </domain>
    <domain>
        <recommendedName>
            <fullName evidence="4">Oxydoreductase</fullName>
            <ecNumber evidence="3">1.5.1.27</ecNumber>
        </recommendedName>
        <alternativeName>
            <fullName evidence="5">1,2-dehydroreticulinium reductase (NADPH)</fullName>
        </alternativeName>
    </domain>
</protein>
<name>STORR_PAPSO</name>
<keyword id="KW-0017">Alkaloid metabolism</keyword>
<keyword id="KW-0349">Heme</keyword>
<keyword id="KW-0408">Iron</keyword>
<keyword id="KW-0472">Membrane</keyword>
<keyword id="KW-0479">Metal-binding</keyword>
<keyword id="KW-0511">Multifunctional enzyme</keyword>
<keyword id="KW-0521">NADP</keyword>
<keyword id="KW-0560">Oxidoreductase</keyword>
<keyword id="KW-0812">Transmembrane</keyword>
<keyword id="KW-1133">Transmembrane helix</keyword>
<evidence type="ECO:0000250" key="1">
    <source>
        <dbReference type="UniProtKB" id="P04798"/>
    </source>
</evidence>
<evidence type="ECO:0000255" key="2"/>
<evidence type="ECO:0000269" key="3">
    <source>
    </source>
</evidence>
<evidence type="ECO:0000303" key="4">
    <source>
    </source>
</evidence>
<evidence type="ECO:0000305" key="5"/>
<proteinExistence type="evidence at protein level"/>
<feature type="chain" id="PRO_0000433977" description="Bifunctional protein STORR" evidence="2">
    <location>
        <begin position="1"/>
        <end position="901"/>
    </location>
</feature>
<feature type="transmembrane region" description="Helical" evidence="2">
    <location>
        <begin position="12"/>
        <end position="32"/>
    </location>
</feature>
<feature type="binding site" description="axial binding residue" evidence="1">
    <location>
        <position position="513"/>
    </location>
    <ligand>
        <name>heme</name>
        <dbReference type="ChEBI" id="CHEBI:30413"/>
    </ligand>
    <ligandPart>
        <name>Fe</name>
        <dbReference type="ChEBI" id="CHEBI:18248"/>
    </ligandPart>
</feature>
<feature type="mutagenesis site" description="In storr-3; accumulates (S)-reticuline but not 1,2-dehydroreticuline." evidence="3">
    <original>G</original>
    <variation>R</variation>
    <location>
        <position position="550"/>
    </location>
</feature>
<sequence>MELQYISYFQPTSSVVALLLALVSILSSVVVLRKTFLNNYSSSPASSTKTAVLSHQRQQSCALPISGLLHIFMNKNGLIHVTLGNMADKYGPIFSFPTGSHRTLVVSSWEMVKECFTGNNDTAFSNRPIPLAFKTIFYACGGIDSYGLSSVPYGKYWRELRKVCVHNLLSNQQLLKFRHLIISQVDTSFNKLYELCKNSEDNHGNYTTTTTTAAGMVRIDDWLAELSFNVIGRIVCGFQSGPKTGAPSRVEQFKEAINEASYFMSTSPVSDNVPMLGWIDQLTGLTRNMKHCGKKLDLVVESIINDHRQKRRFSRTKGGDEKDDEQDDFIDICLSIMEQPQLPGNNNPSQIPIKSIVLDMIGGGTDTTKLTTIWTLSLLLNNPHVLDKAKQEVDAHFRTKRRSTNDAAAAVVDFDDIRNLVYIQAIIKESMRLYPASPVVERLSGEDCVVGGFHVPAGTRLWANVWKMQRDPKVWDDPLVFRPDRFLSDEQKMVDVRGQNYELLPFGAGRRVCPGVSFSLDLMQLVLTRLILEFEMKSPSGKVDMTATPGLMSYKVIPLDILLTHRRIKPCVQSAASERDMESSGVPVITLGSGKVMPVLGMGTFEKVGKGSERERLAILKAIEVGYRYFDTAAAYETEEVLGEAIAEALQLGLVKSRDELFISSMLWCTDAHADRVLLALQNSLRNLKLEYVDLYMLPFPASLKPGKITMDIPEEDICRMDYRSVWAAMEECQNLGFTKSIGVSNFSCKKLQELMATANIPPAVNQVEMSPAFQQKKLREYCNANNILVSAISVLGSNGTPWGSNAVLGSEVLKKIAMAKGKSVAQVSMRWVYEQGASLVVKSFSEERLRENLNIFDWELTKEDHEKIGEIPQCRILSAYFLVSPNGPFKSQEELWDDEA</sequence>
<reference key="1">
    <citation type="journal article" date="2015" name="Science">
        <title>Morphinan biosynthesis in opium poppy requires a P450-oxidoreductase fusion protein.</title>
        <authorList>
            <person name="Winzer T."/>
            <person name="Kern M."/>
            <person name="King A.J."/>
            <person name="Larson T.R."/>
            <person name="Teodor R.I."/>
            <person name="Donninger S.L."/>
            <person name="Li Y."/>
            <person name="Dowle A.A."/>
            <person name="Cartwright J."/>
            <person name="Bates R."/>
            <person name="Ashford D."/>
            <person name="Thomas J."/>
            <person name="Walker C."/>
            <person name="Bowser T.A."/>
            <person name="Graham I.A."/>
        </authorList>
    </citation>
    <scope>NUCLEOTIDE SEQUENCE [MRNA]</scope>
    <scope>IDENTIFICATION BY MASS SPECTROMETRY</scope>
    <scope>FUNCTION</scope>
    <scope>CATALYTIC ACTIVITY</scope>
    <scope>BIOPHYSICOCHEMICAL PROPERTIES</scope>
    <scope>MUTAGENESIS OF GLY-550</scope>
    <source>
        <strain>cv. HM2</strain>
    </source>
</reference>